<organism>
    <name type="scientific">Thermobispora bispora (strain ATCC 19993 / DSM 43833 / CBS 139.67 / JCM 10125 / KCTC 9307 / NBRC 14880 / R51)</name>
    <dbReference type="NCBI Taxonomy" id="469371"/>
    <lineage>
        <taxon>Bacteria</taxon>
        <taxon>Bacillati</taxon>
        <taxon>Actinomycetota</taxon>
        <taxon>Actinomycetes</taxon>
        <taxon>Streptosporangiales</taxon>
        <taxon>Streptosporangiaceae</taxon>
        <taxon>Thermobispora</taxon>
    </lineage>
</organism>
<keyword id="KW-0328">Glycosyltransferase</keyword>
<keyword id="KW-0460">Magnesium</keyword>
<keyword id="KW-0479">Metal-binding</keyword>
<keyword id="KW-1185">Reference proteome</keyword>
<keyword id="KW-0808">Transferase</keyword>
<accession>D6Y4U7</accession>
<gene>
    <name evidence="1" type="primary">mshA</name>
    <name type="ordered locus">Tbis_0494</name>
</gene>
<dbReference type="EC" id="2.4.1.250" evidence="1"/>
<dbReference type="EMBL" id="CP001874">
    <property type="protein sequence ID" value="ADG87222.1"/>
    <property type="molecule type" value="Genomic_DNA"/>
</dbReference>
<dbReference type="RefSeq" id="WP_013130755.1">
    <property type="nucleotide sequence ID" value="NC_014165.1"/>
</dbReference>
<dbReference type="SMR" id="D6Y4U7"/>
<dbReference type="STRING" id="469371.Tbis_0494"/>
<dbReference type="CAZy" id="GT4">
    <property type="family name" value="Glycosyltransferase Family 4"/>
</dbReference>
<dbReference type="KEGG" id="tbi:Tbis_0494"/>
<dbReference type="eggNOG" id="COG0438">
    <property type="taxonomic scope" value="Bacteria"/>
</dbReference>
<dbReference type="HOGENOM" id="CLU_009583_2_3_11"/>
<dbReference type="OrthoDB" id="9810929at2"/>
<dbReference type="Proteomes" id="UP000006640">
    <property type="component" value="Chromosome"/>
</dbReference>
<dbReference type="GO" id="GO:0008375">
    <property type="term" value="F:acetylglucosaminyltransferase activity"/>
    <property type="evidence" value="ECO:0007669"/>
    <property type="project" value="UniProtKB-UniRule"/>
</dbReference>
<dbReference type="GO" id="GO:0102710">
    <property type="term" value="F:D-inositol-3-phosphate glycosyltransferase activity"/>
    <property type="evidence" value="ECO:0007669"/>
    <property type="project" value="UniProtKB-EC"/>
</dbReference>
<dbReference type="GO" id="GO:0000287">
    <property type="term" value="F:magnesium ion binding"/>
    <property type="evidence" value="ECO:0007669"/>
    <property type="project" value="UniProtKB-UniRule"/>
</dbReference>
<dbReference type="GO" id="GO:0010125">
    <property type="term" value="P:mycothiol biosynthetic process"/>
    <property type="evidence" value="ECO:0007669"/>
    <property type="project" value="UniProtKB-UniRule"/>
</dbReference>
<dbReference type="CDD" id="cd03800">
    <property type="entry name" value="GT4_sucrose_synthase"/>
    <property type="match status" value="1"/>
</dbReference>
<dbReference type="Gene3D" id="3.40.50.2000">
    <property type="entry name" value="Glycogen Phosphorylase B"/>
    <property type="match status" value="2"/>
</dbReference>
<dbReference type="HAMAP" id="MF_01695">
    <property type="entry name" value="MshA"/>
    <property type="match status" value="1"/>
</dbReference>
<dbReference type="InterPro" id="IPR001296">
    <property type="entry name" value="Glyco_trans_1"/>
</dbReference>
<dbReference type="InterPro" id="IPR028098">
    <property type="entry name" value="Glyco_trans_4-like_N"/>
</dbReference>
<dbReference type="InterPro" id="IPR017814">
    <property type="entry name" value="Mycothiol_biosynthesis_MshA"/>
</dbReference>
<dbReference type="NCBIfam" id="TIGR03449">
    <property type="entry name" value="mycothiol_MshA"/>
    <property type="match status" value="1"/>
</dbReference>
<dbReference type="PANTHER" id="PTHR12526:SF510">
    <property type="entry name" value="D-INOSITOL 3-PHOSPHATE GLYCOSYLTRANSFERASE"/>
    <property type="match status" value="1"/>
</dbReference>
<dbReference type="PANTHER" id="PTHR12526">
    <property type="entry name" value="GLYCOSYLTRANSFERASE"/>
    <property type="match status" value="1"/>
</dbReference>
<dbReference type="Pfam" id="PF13579">
    <property type="entry name" value="Glyco_trans_4_4"/>
    <property type="match status" value="1"/>
</dbReference>
<dbReference type="Pfam" id="PF00534">
    <property type="entry name" value="Glycos_transf_1"/>
    <property type="match status" value="1"/>
</dbReference>
<dbReference type="SUPFAM" id="SSF53756">
    <property type="entry name" value="UDP-Glycosyltransferase/glycogen phosphorylase"/>
    <property type="match status" value="1"/>
</dbReference>
<comment type="function">
    <text evidence="1">Catalyzes the transfer of a N-acetyl-glucosamine moiety to 1D-myo-inositol 3-phosphate to produce 1D-myo-inositol 2-acetamido-2-deoxy-glucopyranoside 3-phosphate in the mycothiol biosynthesis pathway.</text>
</comment>
<comment type="catalytic activity">
    <reaction evidence="1">
        <text>1D-myo-inositol 3-phosphate + UDP-N-acetyl-alpha-D-glucosamine = 1D-myo-inositol 2-acetamido-2-deoxy-alpha-D-glucopyranoside 3-phosphate + UDP + H(+)</text>
        <dbReference type="Rhea" id="RHEA:26188"/>
        <dbReference type="ChEBI" id="CHEBI:15378"/>
        <dbReference type="ChEBI" id="CHEBI:57705"/>
        <dbReference type="ChEBI" id="CHEBI:58223"/>
        <dbReference type="ChEBI" id="CHEBI:58401"/>
        <dbReference type="ChEBI" id="CHEBI:58892"/>
        <dbReference type="EC" id="2.4.1.250"/>
    </reaction>
</comment>
<comment type="subunit">
    <text evidence="1">Homodimer.</text>
</comment>
<comment type="similarity">
    <text evidence="1">Belongs to the glycosyltransferase group 1 family. MshA subfamily.</text>
</comment>
<reference key="1">
    <citation type="journal article" date="2010" name="Stand. Genomic Sci.">
        <title>Complete genome sequence of Thermobispora bispora type strain (R51).</title>
        <authorList>
            <person name="Liolios K."/>
            <person name="Sikorski J."/>
            <person name="Jando M."/>
            <person name="Lapidus A."/>
            <person name="Copeland A."/>
            <person name="Glavina del Rio T."/>
            <person name="Nolan M."/>
            <person name="Lucas S."/>
            <person name="Tice H."/>
            <person name="Cheng J.F."/>
            <person name="Han C."/>
            <person name="Woyke T."/>
            <person name="Goodwin L."/>
            <person name="Pitluck S."/>
            <person name="Ivanova N."/>
            <person name="Mavromatis K."/>
            <person name="Mikhailova N."/>
            <person name="Chertkov O."/>
            <person name="Kuske C."/>
            <person name="Chen A."/>
            <person name="Palaniappan K."/>
            <person name="Land M."/>
            <person name="Hauser L."/>
            <person name="Chang Y.J."/>
            <person name="Jeffries C.D."/>
            <person name="Detter J.C."/>
            <person name="Brettin T."/>
            <person name="Rohde M."/>
            <person name="Goeker M."/>
            <person name="Bristow J."/>
            <person name="Eisen J.A."/>
            <person name="Markowitz V."/>
            <person name="Hugenholtz P."/>
            <person name="Klenk H.P."/>
            <person name="Kyrpides N.C."/>
        </authorList>
    </citation>
    <scope>NUCLEOTIDE SEQUENCE [LARGE SCALE GENOMIC DNA]</scope>
    <source>
        <strain>ATCC 19993 / DSM 43833 / CBS 139.67 / JCM 10125 / KCTC 9307 / NBRC 14880 / R51</strain>
    </source>
</reference>
<protein>
    <recommendedName>
        <fullName>D-inositol 3-phosphate glycosyltransferase</fullName>
        <ecNumber evidence="1">2.4.1.250</ecNumber>
    </recommendedName>
    <alternativeName>
        <fullName evidence="1">N-acetylglucosamine-inositol-phosphate N-acetylglucosaminyltransferase</fullName>
        <shortName evidence="1">GlcNAc-Ins-P N-acetylglucosaminyltransferase</shortName>
    </alternativeName>
</protein>
<sequence>MAARRRRVNRVATISVHTSPLDQPGTGDAGGMNVYIVEVARRLADLGIEVEIFTRRTARDLPPAVELHPGVLVRHVTAGPYEELDRADLPGQLCSFLSGVLRTEAMYEPGRYDVIHSHYWLSGQVGWLAKERWGVPLVHTMHTMAKVKNLRLAEGDKPEPAIRVLGEEQVVDVADRLVANTVTEARELIELYHAPPERVTVVNPGVNLNIFRPAPKAAARRRLGLPADARVLLFVGRIQPLKAPDVMLRAAAIMIAERPELRSRLIVACVGGPSGNGLARPSLLADLAAELGIADVVRLEPPAPQPELADWYRAADLTVVPSHNESFGLVALESQACGTPVAAASVGGLRTAVRHGVSGVLVDGHDPRQWAASLAELLDDPDRLAALSAGAVRHAARFGWSATAARLAEVYTEALERVHRTVPVGANS</sequence>
<name>MSHA_THEBD</name>
<proteinExistence type="inferred from homology"/>
<evidence type="ECO:0000255" key="1">
    <source>
        <dbReference type="HAMAP-Rule" id="MF_01695"/>
    </source>
</evidence>
<feature type="chain" id="PRO_0000400166" description="D-inositol 3-phosphate glycosyltransferase">
    <location>
        <begin position="1"/>
        <end position="428"/>
    </location>
</feature>
<feature type="binding site" evidence="1">
    <location>
        <position position="17"/>
    </location>
    <ligand>
        <name>1D-myo-inositol 3-phosphate</name>
        <dbReference type="ChEBI" id="CHEBI:58401"/>
    </ligand>
</feature>
<feature type="binding site" evidence="1">
    <location>
        <begin position="23"/>
        <end position="24"/>
    </location>
    <ligand>
        <name>UDP-N-acetyl-alpha-D-glucosamine</name>
        <dbReference type="ChEBI" id="CHEBI:57705"/>
    </ligand>
</feature>
<feature type="binding site" evidence="1">
    <location>
        <begin position="28"/>
        <end position="33"/>
    </location>
    <ligand>
        <name>1D-myo-inositol 3-phosphate</name>
        <dbReference type="ChEBI" id="CHEBI:58401"/>
    </ligand>
</feature>
<feature type="binding site" evidence="1">
    <location>
        <position position="31"/>
    </location>
    <ligand>
        <name>UDP-N-acetyl-alpha-D-glucosamine</name>
        <dbReference type="ChEBI" id="CHEBI:57705"/>
    </ligand>
</feature>
<feature type="binding site" evidence="1">
    <location>
        <position position="86"/>
    </location>
    <ligand>
        <name>1D-myo-inositol 3-phosphate</name>
        <dbReference type="ChEBI" id="CHEBI:58401"/>
    </ligand>
</feature>
<feature type="binding site" evidence="1">
    <location>
        <position position="119"/>
    </location>
    <ligand>
        <name>1D-myo-inositol 3-phosphate</name>
        <dbReference type="ChEBI" id="CHEBI:58401"/>
    </ligand>
</feature>
<feature type="binding site" evidence="1">
    <location>
        <position position="143"/>
    </location>
    <ligand>
        <name>1D-myo-inositol 3-phosphate</name>
        <dbReference type="ChEBI" id="CHEBI:58401"/>
    </ligand>
</feature>
<feature type="binding site" evidence="1">
    <location>
        <position position="163"/>
    </location>
    <ligand>
        <name>1D-myo-inositol 3-phosphate</name>
        <dbReference type="ChEBI" id="CHEBI:58401"/>
    </ligand>
</feature>
<feature type="binding site" evidence="1">
    <location>
        <position position="237"/>
    </location>
    <ligand>
        <name>UDP-N-acetyl-alpha-D-glucosamine</name>
        <dbReference type="ChEBI" id="CHEBI:57705"/>
    </ligand>
</feature>
<feature type="binding site" evidence="1">
    <location>
        <position position="242"/>
    </location>
    <ligand>
        <name>UDP-N-acetyl-alpha-D-glucosamine</name>
        <dbReference type="ChEBI" id="CHEBI:57705"/>
    </ligand>
</feature>
<feature type="binding site" evidence="1">
    <location>
        <position position="312"/>
    </location>
    <ligand>
        <name>Mg(2+)</name>
        <dbReference type="ChEBI" id="CHEBI:18420"/>
    </ligand>
</feature>
<feature type="binding site" evidence="1">
    <location>
        <position position="313"/>
    </location>
    <ligand>
        <name>Mg(2+)</name>
        <dbReference type="ChEBI" id="CHEBI:18420"/>
    </ligand>
</feature>
<feature type="binding site" evidence="1">
    <location>
        <position position="315"/>
    </location>
    <ligand>
        <name>Mg(2+)</name>
        <dbReference type="ChEBI" id="CHEBI:18420"/>
    </ligand>
</feature>
<feature type="binding site" evidence="1">
    <location>
        <position position="325"/>
    </location>
    <ligand>
        <name>UDP-N-acetyl-alpha-D-glucosamine</name>
        <dbReference type="ChEBI" id="CHEBI:57705"/>
    </ligand>
</feature>
<feature type="binding site" evidence="1">
    <location>
        <position position="333"/>
    </location>
    <ligand>
        <name>UDP-N-acetyl-alpha-D-glucosamine</name>
        <dbReference type="ChEBI" id="CHEBI:57705"/>
    </ligand>
</feature>
<feature type="binding site" evidence="1">
    <location>
        <position position="339"/>
    </location>
    <ligand>
        <name>Mg(2+)</name>
        <dbReference type="ChEBI" id="CHEBI:18420"/>
    </ligand>
</feature>